<gene>
    <name evidence="1" type="primary">hisI</name>
    <name type="ordered locus">LSEI_1428</name>
</gene>
<organism>
    <name type="scientific">Lacticaseibacillus paracasei (strain ATCC 334 / BCRC 17002 / CCUG 31169 / CIP 107868 / KCTC 3260 / NRRL B-441)</name>
    <name type="common">Lactobacillus paracasei</name>
    <dbReference type="NCBI Taxonomy" id="321967"/>
    <lineage>
        <taxon>Bacteria</taxon>
        <taxon>Bacillati</taxon>
        <taxon>Bacillota</taxon>
        <taxon>Bacilli</taxon>
        <taxon>Lactobacillales</taxon>
        <taxon>Lactobacillaceae</taxon>
        <taxon>Lacticaseibacillus</taxon>
    </lineage>
</organism>
<accession>Q039B6</accession>
<keyword id="KW-0028">Amino-acid biosynthesis</keyword>
<keyword id="KW-0963">Cytoplasm</keyword>
<keyword id="KW-0368">Histidine biosynthesis</keyword>
<keyword id="KW-0378">Hydrolase</keyword>
<keyword id="KW-0460">Magnesium</keyword>
<keyword id="KW-0479">Metal-binding</keyword>
<keyword id="KW-1185">Reference proteome</keyword>
<keyword id="KW-0862">Zinc</keyword>
<proteinExistence type="inferred from homology"/>
<comment type="function">
    <text evidence="1">Catalyzes the hydrolysis of the adenine ring of phosphoribosyl-AMP.</text>
</comment>
<comment type="catalytic activity">
    <reaction evidence="1">
        <text>1-(5-phospho-beta-D-ribosyl)-5'-AMP + H2O = 1-(5-phospho-beta-D-ribosyl)-5-[(5-phospho-beta-D-ribosylamino)methylideneamino]imidazole-4-carboxamide</text>
        <dbReference type="Rhea" id="RHEA:20049"/>
        <dbReference type="ChEBI" id="CHEBI:15377"/>
        <dbReference type="ChEBI" id="CHEBI:58435"/>
        <dbReference type="ChEBI" id="CHEBI:59457"/>
        <dbReference type="EC" id="3.5.4.19"/>
    </reaction>
</comment>
<comment type="cofactor">
    <cofactor evidence="1">
        <name>Mg(2+)</name>
        <dbReference type="ChEBI" id="CHEBI:18420"/>
    </cofactor>
    <text evidence="1">Binds 1 Mg(2+) ion per subunit.</text>
</comment>
<comment type="cofactor">
    <cofactor evidence="1">
        <name>Zn(2+)</name>
        <dbReference type="ChEBI" id="CHEBI:29105"/>
    </cofactor>
    <text evidence="1">Binds 1 zinc ion per subunit.</text>
</comment>
<comment type="pathway">
    <text evidence="1">Amino-acid biosynthesis; L-histidine biosynthesis; L-histidine from 5-phospho-alpha-D-ribose 1-diphosphate: step 3/9.</text>
</comment>
<comment type="subunit">
    <text evidence="1">Homodimer.</text>
</comment>
<comment type="subcellular location">
    <subcellularLocation>
        <location evidence="1">Cytoplasm</location>
    </subcellularLocation>
</comment>
<comment type="similarity">
    <text evidence="1">Belongs to the PRA-CH family.</text>
</comment>
<sequence length="110" mass="12221">MITLDWEKANGLITTVVQDATTKQVLMVAYMNQESLAKTMATGETWFWSRSRKTLWHKGATSGNIQMVKTIAVDCDADTLLVTVDPAGPACHTGHISCFYRHYPEGKDLT</sequence>
<feature type="chain" id="PRO_0000319694" description="Phosphoribosyl-AMP cyclohydrolase">
    <location>
        <begin position="1"/>
        <end position="110"/>
    </location>
</feature>
<feature type="binding site" evidence="1">
    <location>
        <position position="74"/>
    </location>
    <ligand>
        <name>Mg(2+)</name>
        <dbReference type="ChEBI" id="CHEBI:18420"/>
    </ligand>
</feature>
<feature type="binding site" evidence="1">
    <location>
        <position position="75"/>
    </location>
    <ligand>
        <name>Zn(2+)</name>
        <dbReference type="ChEBI" id="CHEBI:29105"/>
        <note>ligand shared between dimeric partners</note>
    </ligand>
</feature>
<feature type="binding site" evidence="1">
    <location>
        <position position="76"/>
    </location>
    <ligand>
        <name>Mg(2+)</name>
        <dbReference type="ChEBI" id="CHEBI:18420"/>
    </ligand>
</feature>
<feature type="binding site" evidence="1">
    <location>
        <position position="78"/>
    </location>
    <ligand>
        <name>Mg(2+)</name>
        <dbReference type="ChEBI" id="CHEBI:18420"/>
    </ligand>
</feature>
<feature type="binding site" evidence="1">
    <location>
        <position position="91"/>
    </location>
    <ligand>
        <name>Zn(2+)</name>
        <dbReference type="ChEBI" id="CHEBI:29105"/>
        <note>ligand shared between dimeric partners</note>
    </ligand>
</feature>
<feature type="binding site" evidence="1">
    <location>
        <position position="98"/>
    </location>
    <ligand>
        <name>Zn(2+)</name>
        <dbReference type="ChEBI" id="CHEBI:29105"/>
        <note>ligand shared between dimeric partners</note>
    </ligand>
</feature>
<name>HIS3_LACP3</name>
<reference key="1">
    <citation type="journal article" date="2006" name="Proc. Natl. Acad. Sci. U.S.A.">
        <title>Comparative genomics of the lactic acid bacteria.</title>
        <authorList>
            <person name="Makarova K.S."/>
            <person name="Slesarev A."/>
            <person name="Wolf Y.I."/>
            <person name="Sorokin A."/>
            <person name="Mirkin B."/>
            <person name="Koonin E.V."/>
            <person name="Pavlov A."/>
            <person name="Pavlova N."/>
            <person name="Karamychev V."/>
            <person name="Polouchine N."/>
            <person name="Shakhova V."/>
            <person name="Grigoriev I."/>
            <person name="Lou Y."/>
            <person name="Rohksar D."/>
            <person name="Lucas S."/>
            <person name="Huang K."/>
            <person name="Goodstein D.M."/>
            <person name="Hawkins T."/>
            <person name="Plengvidhya V."/>
            <person name="Welker D."/>
            <person name="Hughes J."/>
            <person name="Goh Y."/>
            <person name="Benson A."/>
            <person name="Baldwin K."/>
            <person name="Lee J.-H."/>
            <person name="Diaz-Muniz I."/>
            <person name="Dosti B."/>
            <person name="Smeianov V."/>
            <person name="Wechter W."/>
            <person name="Barabote R."/>
            <person name="Lorca G."/>
            <person name="Altermann E."/>
            <person name="Barrangou R."/>
            <person name="Ganesan B."/>
            <person name="Xie Y."/>
            <person name="Rawsthorne H."/>
            <person name="Tamir D."/>
            <person name="Parker C."/>
            <person name="Breidt F."/>
            <person name="Broadbent J.R."/>
            <person name="Hutkins R."/>
            <person name="O'Sullivan D."/>
            <person name="Steele J."/>
            <person name="Unlu G."/>
            <person name="Saier M.H. Jr."/>
            <person name="Klaenhammer T."/>
            <person name="Richardson P."/>
            <person name="Kozyavkin S."/>
            <person name="Weimer B.C."/>
            <person name="Mills D.A."/>
        </authorList>
    </citation>
    <scope>NUCLEOTIDE SEQUENCE [LARGE SCALE GENOMIC DNA]</scope>
    <source>
        <strain>ATCC 334 / BCRC 17002 / CCUG 31169 / CIP 107868 / KCTC 3260 / NRRL B-441</strain>
    </source>
</reference>
<protein>
    <recommendedName>
        <fullName evidence="1">Phosphoribosyl-AMP cyclohydrolase</fullName>
        <shortName evidence="1">PRA-CH</shortName>
        <ecNumber evidence="1">3.5.4.19</ecNumber>
    </recommendedName>
</protein>
<evidence type="ECO:0000255" key="1">
    <source>
        <dbReference type="HAMAP-Rule" id="MF_01021"/>
    </source>
</evidence>
<dbReference type="EC" id="3.5.4.19" evidence="1"/>
<dbReference type="EMBL" id="CP000423">
    <property type="protein sequence ID" value="ABJ70206.1"/>
    <property type="molecule type" value="Genomic_DNA"/>
</dbReference>
<dbReference type="RefSeq" id="WP_003594467.1">
    <property type="nucleotide sequence ID" value="NC_008526.1"/>
</dbReference>
<dbReference type="RefSeq" id="YP_806648.1">
    <property type="nucleotide sequence ID" value="NC_008526.1"/>
</dbReference>
<dbReference type="SMR" id="Q039B6"/>
<dbReference type="STRING" id="321967.LSEI_1428"/>
<dbReference type="PaxDb" id="321967-LSEI_1428"/>
<dbReference type="KEGG" id="lca:LSEI_1428"/>
<dbReference type="PATRIC" id="fig|321967.11.peg.1408"/>
<dbReference type="HOGENOM" id="CLU_048577_5_3_9"/>
<dbReference type="UniPathway" id="UPA00031">
    <property type="reaction ID" value="UER00008"/>
</dbReference>
<dbReference type="Proteomes" id="UP000001651">
    <property type="component" value="Chromosome"/>
</dbReference>
<dbReference type="GO" id="GO:0005737">
    <property type="term" value="C:cytoplasm"/>
    <property type="evidence" value="ECO:0007669"/>
    <property type="project" value="UniProtKB-SubCell"/>
</dbReference>
<dbReference type="GO" id="GO:0000287">
    <property type="term" value="F:magnesium ion binding"/>
    <property type="evidence" value="ECO:0007669"/>
    <property type="project" value="UniProtKB-UniRule"/>
</dbReference>
<dbReference type="GO" id="GO:0004635">
    <property type="term" value="F:phosphoribosyl-AMP cyclohydrolase activity"/>
    <property type="evidence" value="ECO:0007669"/>
    <property type="project" value="UniProtKB-UniRule"/>
</dbReference>
<dbReference type="GO" id="GO:0008270">
    <property type="term" value="F:zinc ion binding"/>
    <property type="evidence" value="ECO:0007669"/>
    <property type="project" value="UniProtKB-UniRule"/>
</dbReference>
<dbReference type="GO" id="GO:0000105">
    <property type="term" value="P:L-histidine biosynthetic process"/>
    <property type="evidence" value="ECO:0007669"/>
    <property type="project" value="UniProtKB-UniRule"/>
</dbReference>
<dbReference type="FunFam" id="3.10.20.810:FF:000001">
    <property type="entry name" value="Histidine biosynthesis bifunctional protein HisIE"/>
    <property type="match status" value="1"/>
</dbReference>
<dbReference type="Gene3D" id="3.10.20.810">
    <property type="entry name" value="Phosphoribosyl-AMP cyclohydrolase"/>
    <property type="match status" value="1"/>
</dbReference>
<dbReference type="HAMAP" id="MF_01021">
    <property type="entry name" value="HisI"/>
    <property type="match status" value="1"/>
</dbReference>
<dbReference type="InterPro" id="IPR026660">
    <property type="entry name" value="PRA-CH"/>
</dbReference>
<dbReference type="InterPro" id="IPR002496">
    <property type="entry name" value="PRib_AMP_CycHydrolase_dom"/>
</dbReference>
<dbReference type="InterPro" id="IPR038019">
    <property type="entry name" value="PRib_AMP_CycHydrolase_sf"/>
</dbReference>
<dbReference type="NCBIfam" id="NF000768">
    <property type="entry name" value="PRK00051.1"/>
    <property type="match status" value="1"/>
</dbReference>
<dbReference type="PANTHER" id="PTHR42945">
    <property type="entry name" value="HISTIDINE BIOSYNTHESIS BIFUNCTIONAL PROTEIN"/>
    <property type="match status" value="1"/>
</dbReference>
<dbReference type="PANTHER" id="PTHR42945:SF1">
    <property type="entry name" value="HISTIDINE BIOSYNTHESIS BIFUNCTIONAL PROTEIN HIS7"/>
    <property type="match status" value="1"/>
</dbReference>
<dbReference type="Pfam" id="PF01502">
    <property type="entry name" value="PRA-CH"/>
    <property type="match status" value="1"/>
</dbReference>
<dbReference type="SUPFAM" id="SSF141734">
    <property type="entry name" value="HisI-like"/>
    <property type="match status" value="1"/>
</dbReference>